<protein>
    <recommendedName>
        <fullName evidence="1">Integration host factor subunit beta</fullName>
        <shortName evidence="1">IHF-beta</shortName>
    </recommendedName>
</protein>
<sequence length="93" mass="10427">MTKSELIERIVTQQGLLSSKDVELAIKTMLEQMAQALATGERIEIRGFGSFSLHYRAPRVGRNPKTGQSVSLDGKFVPHFKPGKELRDRVNDD</sequence>
<gene>
    <name evidence="1" type="primary">ihfB</name>
    <name evidence="1" type="synonym">himD</name>
    <name type="ordered locus">PST_2506</name>
</gene>
<reference key="1">
    <citation type="journal article" date="2008" name="Proc. Natl. Acad. Sci. U.S.A.">
        <title>Nitrogen fixation island and rhizosphere competence traits in the genome of root-associated Pseudomonas stutzeri A1501.</title>
        <authorList>
            <person name="Yan Y."/>
            <person name="Yang J."/>
            <person name="Dou Y."/>
            <person name="Chen M."/>
            <person name="Ping S."/>
            <person name="Peng J."/>
            <person name="Lu W."/>
            <person name="Zhang W."/>
            <person name="Yao Z."/>
            <person name="Li H."/>
            <person name="Liu W."/>
            <person name="He S."/>
            <person name="Geng L."/>
            <person name="Zhang X."/>
            <person name="Yang F."/>
            <person name="Yu H."/>
            <person name="Zhan Y."/>
            <person name="Li D."/>
            <person name="Lin Z."/>
            <person name="Wang Y."/>
            <person name="Elmerich C."/>
            <person name="Lin M."/>
            <person name="Jin Q."/>
        </authorList>
    </citation>
    <scope>NUCLEOTIDE SEQUENCE [LARGE SCALE GENOMIC DNA]</scope>
    <source>
        <strain>A1501</strain>
    </source>
</reference>
<proteinExistence type="inferred from homology"/>
<comment type="function">
    <text evidence="1">This protein is one of the two subunits of integration host factor, a specific DNA-binding protein that functions in genetic recombination as well as in transcriptional and translational control.</text>
</comment>
<comment type="subunit">
    <text evidence="1">Heterodimer of an alpha and a beta chain.</text>
</comment>
<comment type="similarity">
    <text evidence="1">Belongs to the bacterial histone-like protein family.</text>
</comment>
<dbReference type="EMBL" id="CP000304">
    <property type="protein sequence ID" value="ABP80158.1"/>
    <property type="molecule type" value="Genomic_DNA"/>
</dbReference>
<dbReference type="RefSeq" id="WP_011913620.1">
    <property type="nucleotide sequence ID" value="NC_009434.1"/>
</dbReference>
<dbReference type="SMR" id="A4VMF7"/>
<dbReference type="KEGG" id="psa:PST_2506"/>
<dbReference type="eggNOG" id="COG0776">
    <property type="taxonomic scope" value="Bacteria"/>
</dbReference>
<dbReference type="HOGENOM" id="CLU_105066_2_0_6"/>
<dbReference type="Proteomes" id="UP000000233">
    <property type="component" value="Chromosome"/>
</dbReference>
<dbReference type="GO" id="GO:0005694">
    <property type="term" value="C:chromosome"/>
    <property type="evidence" value="ECO:0007669"/>
    <property type="project" value="InterPro"/>
</dbReference>
<dbReference type="GO" id="GO:0005829">
    <property type="term" value="C:cytosol"/>
    <property type="evidence" value="ECO:0007669"/>
    <property type="project" value="TreeGrafter"/>
</dbReference>
<dbReference type="GO" id="GO:0003677">
    <property type="term" value="F:DNA binding"/>
    <property type="evidence" value="ECO:0007669"/>
    <property type="project" value="UniProtKB-UniRule"/>
</dbReference>
<dbReference type="GO" id="GO:0030527">
    <property type="term" value="F:structural constituent of chromatin"/>
    <property type="evidence" value="ECO:0007669"/>
    <property type="project" value="InterPro"/>
</dbReference>
<dbReference type="GO" id="GO:0006310">
    <property type="term" value="P:DNA recombination"/>
    <property type="evidence" value="ECO:0007669"/>
    <property type="project" value="UniProtKB-UniRule"/>
</dbReference>
<dbReference type="GO" id="GO:0006355">
    <property type="term" value="P:regulation of DNA-templated transcription"/>
    <property type="evidence" value="ECO:0007669"/>
    <property type="project" value="UniProtKB-UniRule"/>
</dbReference>
<dbReference type="GO" id="GO:0006417">
    <property type="term" value="P:regulation of translation"/>
    <property type="evidence" value="ECO:0007669"/>
    <property type="project" value="UniProtKB-UniRule"/>
</dbReference>
<dbReference type="CDD" id="cd13836">
    <property type="entry name" value="IHF_B"/>
    <property type="match status" value="1"/>
</dbReference>
<dbReference type="FunFam" id="4.10.520.10:FF:000003">
    <property type="entry name" value="Integration host factor subunit beta"/>
    <property type="match status" value="1"/>
</dbReference>
<dbReference type="Gene3D" id="4.10.520.10">
    <property type="entry name" value="IHF-like DNA-binding proteins"/>
    <property type="match status" value="1"/>
</dbReference>
<dbReference type="HAMAP" id="MF_00381">
    <property type="entry name" value="IHF_beta"/>
    <property type="match status" value="1"/>
</dbReference>
<dbReference type="InterPro" id="IPR000119">
    <property type="entry name" value="Hist_DNA-bd"/>
</dbReference>
<dbReference type="InterPro" id="IPR020816">
    <property type="entry name" value="Histone-like_DNA-bd_CS"/>
</dbReference>
<dbReference type="InterPro" id="IPR010992">
    <property type="entry name" value="IHF-like_DNA-bd_dom_sf"/>
</dbReference>
<dbReference type="InterPro" id="IPR005685">
    <property type="entry name" value="IHF_beta"/>
</dbReference>
<dbReference type="NCBIfam" id="TIGR00988">
    <property type="entry name" value="hip"/>
    <property type="match status" value="1"/>
</dbReference>
<dbReference type="NCBIfam" id="NF001222">
    <property type="entry name" value="PRK00199.1"/>
    <property type="match status" value="1"/>
</dbReference>
<dbReference type="PANTHER" id="PTHR33175">
    <property type="entry name" value="DNA-BINDING PROTEIN HU"/>
    <property type="match status" value="1"/>
</dbReference>
<dbReference type="PANTHER" id="PTHR33175:SF5">
    <property type="entry name" value="INTEGRATION HOST FACTOR SUBUNIT BETA"/>
    <property type="match status" value="1"/>
</dbReference>
<dbReference type="Pfam" id="PF00216">
    <property type="entry name" value="Bac_DNA_binding"/>
    <property type="match status" value="1"/>
</dbReference>
<dbReference type="PRINTS" id="PR01727">
    <property type="entry name" value="DNABINDINGHU"/>
</dbReference>
<dbReference type="SMART" id="SM00411">
    <property type="entry name" value="BHL"/>
    <property type="match status" value="1"/>
</dbReference>
<dbReference type="SUPFAM" id="SSF47729">
    <property type="entry name" value="IHF-like DNA-binding proteins"/>
    <property type="match status" value="1"/>
</dbReference>
<dbReference type="PROSITE" id="PS00045">
    <property type="entry name" value="HISTONE_LIKE"/>
    <property type="match status" value="1"/>
</dbReference>
<organism>
    <name type="scientific">Stutzerimonas stutzeri (strain A1501)</name>
    <name type="common">Pseudomonas stutzeri</name>
    <dbReference type="NCBI Taxonomy" id="379731"/>
    <lineage>
        <taxon>Bacteria</taxon>
        <taxon>Pseudomonadati</taxon>
        <taxon>Pseudomonadota</taxon>
        <taxon>Gammaproteobacteria</taxon>
        <taxon>Pseudomonadales</taxon>
        <taxon>Pseudomonadaceae</taxon>
        <taxon>Stutzerimonas</taxon>
    </lineage>
</organism>
<name>IHFB_STUS1</name>
<keyword id="KW-0233">DNA recombination</keyword>
<keyword id="KW-0238">DNA-binding</keyword>
<keyword id="KW-1185">Reference proteome</keyword>
<keyword id="KW-0804">Transcription</keyword>
<keyword id="KW-0805">Transcription regulation</keyword>
<keyword id="KW-0810">Translation regulation</keyword>
<evidence type="ECO:0000255" key="1">
    <source>
        <dbReference type="HAMAP-Rule" id="MF_00381"/>
    </source>
</evidence>
<evidence type="ECO:0000256" key="2">
    <source>
        <dbReference type="SAM" id="MobiDB-lite"/>
    </source>
</evidence>
<accession>A4VMF7</accession>
<feature type="chain" id="PRO_1000060638" description="Integration host factor subunit beta">
    <location>
        <begin position="1"/>
        <end position="93"/>
    </location>
</feature>
<feature type="region of interest" description="Disordered" evidence="2">
    <location>
        <begin position="59"/>
        <end position="93"/>
    </location>
</feature>
<feature type="compositionally biased region" description="Basic and acidic residues" evidence="2">
    <location>
        <begin position="82"/>
        <end position="93"/>
    </location>
</feature>